<comment type="function">
    <text evidence="1">Catalyzes the formation of phosphatidylethanolamine (PtdEtn) from phosphatidylserine (PtdSer).</text>
</comment>
<comment type="catalytic activity">
    <reaction evidence="1">
        <text>a 1,2-diacyl-sn-glycero-3-phospho-L-serine + H(+) = a 1,2-diacyl-sn-glycero-3-phosphoethanolamine + CO2</text>
        <dbReference type="Rhea" id="RHEA:20828"/>
        <dbReference type="ChEBI" id="CHEBI:15378"/>
        <dbReference type="ChEBI" id="CHEBI:16526"/>
        <dbReference type="ChEBI" id="CHEBI:57262"/>
        <dbReference type="ChEBI" id="CHEBI:64612"/>
        <dbReference type="EC" id="4.1.1.65"/>
    </reaction>
</comment>
<comment type="cofactor">
    <cofactor evidence="1">
        <name>pyruvate</name>
        <dbReference type="ChEBI" id="CHEBI:15361"/>
    </cofactor>
    <text evidence="1">Binds 1 pyruvoyl group covalently per subunit.</text>
</comment>
<comment type="pathway">
    <text evidence="1">Phospholipid metabolism; phosphatidylethanolamine biosynthesis; phosphatidylethanolamine from CDP-diacylglycerol: step 2/2.</text>
</comment>
<comment type="subunit">
    <text evidence="1">Heterodimer of a large membrane-associated beta subunit and a small pyruvoyl-containing alpha subunit.</text>
</comment>
<comment type="subcellular location">
    <subcellularLocation>
        <location evidence="1">Cell membrane</location>
        <topology evidence="1">Peripheral membrane protein</topology>
    </subcellularLocation>
</comment>
<comment type="PTM">
    <text evidence="1">Is synthesized initially as an inactive proenzyme. Formation of the active enzyme involves a self-maturation process in which the active site pyruvoyl group is generated from an internal serine residue via an autocatalytic post-translational modification. Two non-identical subunits are generated from the proenzyme in this reaction, and the pyruvate is formed at the N-terminus of the alpha chain, which is derived from the carboxyl end of the proenzyme. The autoendoproteolytic cleavage occurs by a canonical serine protease mechanism, in which the side chain hydroxyl group of the serine supplies its oxygen atom to form the C-terminus of the beta chain, while the remainder of the serine residue undergoes an oxidative deamination to produce ammonia and the pyruvoyl prosthetic group on the alpha chain. During this reaction, the Ser that is part of the protease active site of the proenzyme becomes the pyruvoyl prosthetic group, which constitutes an essential element of the active site of the mature decarboxylase.</text>
</comment>
<comment type="similarity">
    <text evidence="1">Belongs to the phosphatidylserine decarboxylase family. PSD-B subfamily. Prokaryotic type II sub-subfamily.</text>
</comment>
<proteinExistence type="inferred from homology"/>
<sequence length="295" mass="34178">MIKYYNRKNKDYDIEKVAGEKYLNWTYSSPIGMNLLEVFIKKKFFSKIYGFYCDRRLSHKKINKFINDFKIDMSLSENQSSNFKCFNDFFTRKLKKEARPIKTDKNLLISPGDGKILAYENLNLNSVTEVKGINYSFYELINNDSLAKEYDNGTCLVLRLCPTDYHRFHFIDNGICENTIKLKGFYYSVNPIALSKIPSVFCKNKREYSIFHSENFGDIIFMEVGATCVGSIIQTYKPNTKILKGDEKGYFKFGGSTVILFFKKNTIKIDNDILNQSKLGYETSVVMGESIGIKK</sequence>
<organism>
    <name type="scientific">Clostridium botulinum (strain Hall / ATCC 3502 / NCTC 13319 / Type A)</name>
    <dbReference type="NCBI Taxonomy" id="441771"/>
    <lineage>
        <taxon>Bacteria</taxon>
        <taxon>Bacillati</taxon>
        <taxon>Bacillota</taxon>
        <taxon>Clostridia</taxon>
        <taxon>Eubacteriales</taxon>
        <taxon>Clostridiaceae</taxon>
        <taxon>Clostridium</taxon>
    </lineage>
</organism>
<reference key="1">
    <citation type="journal article" date="2007" name="Genome Res.">
        <title>Genome sequence of a proteolytic (Group I) Clostridium botulinum strain Hall A and comparative analysis of the clostridial genomes.</title>
        <authorList>
            <person name="Sebaihia M."/>
            <person name="Peck M.W."/>
            <person name="Minton N.P."/>
            <person name="Thomson N.R."/>
            <person name="Holden M.T.G."/>
            <person name="Mitchell W.J."/>
            <person name="Carter A.T."/>
            <person name="Bentley S.D."/>
            <person name="Mason D.R."/>
            <person name="Crossman L."/>
            <person name="Paul C.J."/>
            <person name="Ivens A."/>
            <person name="Wells-Bennik M.H.J."/>
            <person name="Davis I.J."/>
            <person name="Cerdeno-Tarraga A.M."/>
            <person name="Churcher C."/>
            <person name="Quail M.A."/>
            <person name="Chillingworth T."/>
            <person name="Feltwell T."/>
            <person name="Fraser A."/>
            <person name="Goodhead I."/>
            <person name="Hance Z."/>
            <person name="Jagels K."/>
            <person name="Larke N."/>
            <person name="Maddison M."/>
            <person name="Moule S."/>
            <person name="Mungall K."/>
            <person name="Norbertczak H."/>
            <person name="Rabbinowitsch E."/>
            <person name="Sanders M."/>
            <person name="Simmonds M."/>
            <person name="White B."/>
            <person name="Whithead S."/>
            <person name="Parkhill J."/>
        </authorList>
    </citation>
    <scope>NUCLEOTIDE SEQUENCE [LARGE SCALE GENOMIC DNA]</scope>
    <source>
        <strain>Hall / ATCC 3502 / NCTC 13319 / Type A</strain>
    </source>
</reference>
<reference key="2">
    <citation type="journal article" date="2007" name="PLoS ONE">
        <title>Analysis of the neurotoxin complex genes in Clostridium botulinum A1-A4 and B1 strains: BoNT/A3, /Ba4 and /B1 clusters are located within plasmids.</title>
        <authorList>
            <person name="Smith T.J."/>
            <person name="Hill K.K."/>
            <person name="Foley B.T."/>
            <person name="Detter J.C."/>
            <person name="Munk A.C."/>
            <person name="Bruce D.C."/>
            <person name="Doggett N.A."/>
            <person name="Smith L.A."/>
            <person name="Marks J.D."/>
            <person name="Xie G."/>
            <person name="Brettin T.S."/>
        </authorList>
    </citation>
    <scope>NUCLEOTIDE SEQUENCE [LARGE SCALE GENOMIC DNA]</scope>
    <source>
        <strain>Hall / ATCC 3502 / NCTC 13319 / Type A</strain>
    </source>
</reference>
<evidence type="ECO:0000255" key="1">
    <source>
        <dbReference type="HAMAP-Rule" id="MF_00663"/>
    </source>
</evidence>
<keyword id="KW-1003">Cell membrane</keyword>
<keyword id="KW-0210">Decarboxylase</keyword>
<keyword id="KW-0444">Lipid biosynthesis</keyword>
<keyword id="KW-0443">Lipid metabolism</keyword>
<keyword id="KW-0456">Lyase</keyword>
<keyword id="KW-0472">Membrane</keyword>
<keyword id="KW-0594">Phospholipid biosynthesis</keyword>
<keyword id="KW-1208">Phospholipid metabolism</keyword>
<keyword id="KW-0670">Pyruvate</keyword>
<keyword id="KW-1185">Reference proteome</keyword>
<keyword id="KW-0865">Zymogen</keyword>
<dbReference type="EC" id="4.1.1.65" evidence="1"/>
<dbReference type="EMBL" id="CP000727">
    <property type="protein sequence ID" value="ABS39077.1"/>
    <property type="molecule type" value="Genomic_DNA"/>
</dbReference>
<dbReference type="EMBL" id="AM412317">
    <property type="protein sequence ID" value="CAL81578.1"/>
    <property type="molecule type" value="Genomic_DNA"/>
</dbReference>
<dbReference type="RefSeq" id="WP_011947908.1">
    <property type="nucleotide sequence ID" value="NC_009698.1"/>
</dbReference>
<dbReference type="RefSeq" id="YP_001252573.1">
    <property type="nucleotide sequence ID" value="NC_009495.1"/>
</dbReference>
<dbReference type="RefSeq" id="YP_001385984.1">
    <property type="nucleotide sequence ID" value="NC_009698.1"/>
</dbReference>
<dbReference type="SMR" id="A5HXS0"/>
<dbReference type="GeneID" id="5184280"/>
<dbReference type="KEGG" id="cbh:CLC_0042"/>
<dbReference type="KEGG" id="cbo:CBO0025"/>
<dbReference type="PATRIC" id="fig|413999.7.peg.23"/>
<dbReference type="HOGENOM" id="CLU_029061_2_2_9"/>
<dbReference type="UniPathway" id="UPA00558">
    <property type="reaction ID" value="UER00616"/>
</dbReference>
<dbReference type="PRO" id="PR:A5HXS0"/>
<dbReference type="Proteomes" id="UP000001986">
    <property type="component" value="Chromosome"/>
</dbReference>
<dbReference type="GO" id="GO:0005886">
    <property type="term" value="C:plasma membrane"/>
    <property type="evidence" value="ECO:0007669"/>
    <property type="project" value="UniProtKB-SubCell"/>
</dbReference>
<dbReference type="GO" id="GO:0004609">
    <property type="term" value="F:phosphatidylserine decarboxylase activity"/>
    <property type="evidence" value="ECO:0007669"/>
    <property type="project" value="UniProtKB-UniRule"/>
</dbReference>
<dbReference type="GO" id="GO:0006646">
    <property type="term" value="P:phosphatidylethanolamine biosynthetic process"/>
    <property type="evidence" value="ECO:0007669"/>
    <property type="project" value="UniProtKB-UniRule"/>
</dbReference>
<dbReference type="HAMAP" id="MF_00663">
    <property type="entry name" value="PS_decarb_PSD_B_type2"/>
    <property type="match status" value="1"/>
</dbReference>
<dbReference type="InterPro" id="IPR003817">
    <property type="entry name" value="PS_Dcarbxylase"/>
</dbReference>
<dbReference type="InterPro" id="IPR033177">
    <property type="entry name" value="PSD-B"/>
</dbReference>
<dbReference type="InterPro" id="IPR033179">
    <property type="entry name" value="PSD_type2_pro"/>
</dbReference>
<dbReference type="NCBIfam" id="NF001941">
    <property type="entry name" value="PRK00723.1"/>
    <property type="match status" value="1"/>
</dbReference>
<dbReference type="NCBIfam" id="TIGR00163">
    <property type="entry name" value="PS_decarb"/>
    <property type="match status" value="1"/>
</dbReference>
<dbReference type="PANTHER" id="PTHR10067">
    <property type="entry name" value="PHOSPHATIDYLSERINE DECARBOXYLASE"/>
    <property type="match status" value="1"/>
</dbReference>
<dbReference type="PANTHER" id="PTHR10067:SF17">
    <property type="entry name" value="PHOSPHATIDYLSERINE DECARBOXYLASE PROENZYME 2"/>
    <property type="match status" value="1"/>
</dbReference>
<dbReference type="Pfam" id="PF02666">
    <property type="entry name" value="PS_Dcarbxylase"/>
    <property type="match status" value="1"/>
</dbReference>
<gene>
    <name evidence="1" type="primary">psd</name>
    <name type="ordered locus">CBO0025</name>
    <name type="ordered locus">CLC_0042</name>
</gene>
<accession>A5HXS0</accession>
<accession>A7FZU6</accession>
<protein>
    <recommendedName>
        <fullName evidence="1">Phosphatidylserine decarboxylase proenzyme</fullName>
        <ecNumber evidence="1">4.1.1.65</ecNumber>
    </recommendedName>
    <component>
        <recommendedName>
            <fullName evidence="1">Phosphatidylserine decarboxylase alpha chain</fullName>
        </recommendedName>
    </component>
    <component>
        <recommendedName>
            <fullName evidence="1">Phosphatidylserine decarboxylase beta chain</fullName>
        </recommendedName>
    </component>
</protein>
<feature type="chain" id="PRO_1000026610" description="Phosphatidylserine decarboxylase beta chain" evidence="1">
    <location>
        <begin position="1"/>
        <end position="255"/>
    </location>
</feature>
<feature type="chain" id="PRO_1000026611" description="Phosphatidylserine decarboxylase alpha chain" evidence="1">
    <location>
        <begin position="256"/>
        <end position="295"/>
    </location>
</feature>
<feature type="active site" description="Charge relay system; for autoendoproteolytic cleavage activity" evidence="1">
    <location>
        <position position="113"/>
    </location>
</feature>
<feature type="active site" description="Charge relay system; for autoendoproteolytic cleavage activity" evidence="1">
    <location>
        <position position="169"/>
    </location>
</feature>
<feature type="active site" description="Charge relay system; for autoendoproteolytic cleavage activity" evidence="1">
    <location>
        <position position="256"/>
    </location>
</feature>
<feature type="active site" description="Schiff-base intermediate with substrate; via pyruvic acid; for decarboxylase activity" evidence="1">
    <location>
        <position position="256"/>
    </location>
</feature>
<feature type="site" description="Cleavage (non-hydrolytic); by autocatalysis" evidence="1">
    <location>
        <begin position="255"/>
        <end position="256"/>
    </location>
</feature>
<feature type="modified residue" description="Pyruvic acid (Ser); by autocatalysis" evidence="1">
    <location>
        <position position="256"/>
    </location>
</feature>
<name>PSD_CLOBH</name>